<gene>
    <name evidence="1" type="primary">panD</name>
    <name type="ordered locus">Tmel_0284</name>
</gene>
<feature type="chain" id="PRO_1000026176" description="Aspartate 1-decarboxylase beta chain" evidence="1">
    <location>
        <begin position="1"/>
        <end position="24"/>
    </location>
</feature>
<feature type="chain" id="PRO_0000316067" description="Aspartate 1-decarboxylase alpha chain" evidence="1">
    <location>
        <begin position="25"/>
        <end position="119"/>
    </location>
</feature>
<feature type="active site" description="Schiff-base intermediate with substrate; via pyruvic acid" evidence="1">
    <location>
        <position position="25"/>
    </location>
</feature>
<feature type="active site" description="Proton donor" evidence="1">
    <location>
        <position position="58"/>
    </location>
</feature>
<feature type="binding site" evidence="1">
    <location>
        <position position="57"/>
    </location>
    <ligand>
        <name>substrate</name>
    </ligand>
</feature>
<feature type="binding site" evidence="1">
    <location>
        <begin position="73"/>
        <end position="75"/>
    </location>
    <ligand>
        <name>substrate</name>
    </ligand>
</feature>
<feature type="modified residue" description="Pyruvic acid (Ser)" evidence="1">
    <location>
        <position position="25"/>
    </location>
</feature>
<dbReference type="EC" id="4.1.1.11" evidence="1"/>
<dbReference type="EMBL" id="CP000716">
    <property type="protein sequence ID" value="ABR30156.1"/>
    <property type="molecule type" value="Genomic_DNA"/>
</dbReference>
<dbReference type="RefSeq" id="WP_012056517.1">
    <property type="nucleotide sequence ID" value="NC_009616.1"/>
</dbReference>
<dbReference type="SMR" id="A6LJQ5"/>
<dbReference type="STRING" id="391009.Tmel_0284"/>
<dbReference type="KEGG" id="tme:Tmel_0284"/>
<dbReference type="eggNOG" id="COG0853">
    <property type="taxonomic scope" value="Bacteria"/>
</dbReference>
<dbReference type="HOGENOM" id="CLU_115305_2_1_0"/>
<dbReference type="OrthoDB" id="9803983at2"/>
<dbReference type="UniPathway" id="UPA00028">
    <property type="reaction ID" value="UER00002"/>
</dbReference>
<dbReference type="Proteomes" id="UP000001110">
    <property type="component" value="Chromosome"/>
</dbReference>
<dbReference type="GO" id="GO:0005829">
    <property type="term" value="C:cytosol"/>
    <property type="evidence" value="ECO:0007669"/>
    <property type="project" value="TreeGrafter"/>
</dbReference>
<dbReference type="GO" id="GO:0004068">
    <property type="term" value="F:aspartate 1-decarboxylase activity"/>
    <property type="evidence" value="ECO:0007669"/>
    <property type="project" value="UniProtKB-UniRule"/>
</dbReference>
<dbReference type="GO" id="GO:0006523">
    <property type="term" value="P:alanine biosynthetic process"/>
    <property type="evidence" value="ECO:0007669"/>
    <property type="project" value="InterPro"/>
</dbReference>
<dbReference type="GO" id="GO:0015940">
    <property type="term" value="P:pantothenate biosynthetic process"/>
    <property type="evidence" value="ECO:0007669"/>
    <property type="project" value="UniProtKB-UniRule"/>
</dbReference>
<dbReference type="CDD" id="cd06919">
    <property type="entry name" value="Asp_decarbox"/>
    <property type="match status" value="1"/>
</dbReference>
<dbReference type="Gene3D" id="2.40.40.20">
    <property type="match status" value="1"/>
</dbReference>
<dbReference type="HAMAP" id="MF_00446">
    <property type="entry name" value="PanD"/>
    <property type="match status" value="1"/>
</dbReference>
<dbReference type="InterPro" id="IPR009010">
    <property type="entry name" value="Asp_de-COase-like_dom_sf"/>
</dbReference>
<dbReference type="InterPro" id="IPR003190">
    <property type="entry name" value="Asp_decarbox"/>
</dbReference>
<dbReference type="NCBIfam" id="TIGR00223">
    <property type="entry name" value="panD"/>
    <property type="match status" value="1"/>
</dbReference>
<dbReference type="PANTHER" id="PTHR21012">
    <property type="entry name" value="ASPARTATE 1-DECARBOXYLASE"/>
    <property type="match status" value="1"/>
</dbReference>
<dbReference type="PANTHER" id="PTHR21012:SF0">
    <property type="entry name" value="ASPARTATE 1-DECARBOXYLASE"/>
    <property type="match status" value="1"/>
</dbReference>
<dbReference type="Pfam" id="PF02261">
    <property type="entry name" value="Asp_decarbox"/>
    <property type="match status" value="1"/>
</dbReference>
<dbReference type="PIRSF" id="PIRSF006246">
    <property type="entry name" value="Asp_decarbox"/>
    <property type="match status" value="1"/>
</dbReference>
<dbReference type="SUPFAM" id="SSF50692">
    <property type="entry name" value="ADC-like"/>
    <property type="match status" value="1"/>
</dbReference>
<protein>
    <recommendedName>
        <fullName evidence="1">Aspartate 1-decarboxylase</fullName>
        <ecNumber evidence="1">4.1.1.11</ecNumber>
    </recommendedName>
    <alternativeName>
        <fullName evidence="1">Aspartate alpha-decarboxylase</fullName>
    </alternativeName>
    <component>
        <recommendedName>
            <fullName evidence="1">Aspartate 1-decarboxylase beta chain</fullName>
        </recommendedName>
    </component>
    <component>
        <recommendedName>
            <fullName evidence="1">Aspartate 1-decarboxylase alpha chain</fullName>
        </recommendedName>
    </component>
</protein>
<proteinExistence type="inferred from homology"/>
<name>PAND_THEM4</name>
<evidence type="ECO:0000255" key="1">
    <source>
        <dbReference type="HAMAP-Rule" id="MF_00446"/>
    </source>
</evidence>
<sequence>MQEILLKSKIHMAKVTDKSINYMGSIGIDVELLEKSNIKPYELVLVADVNNGQRFVTYTIPEEKGSRKIVVNGAAARLVEQGDRVIIMAFGMYENDEYKGPRVLIMNEDNEVVEIREGT</sequence>
<keyword id="KW-0068">Autocatalytic cleavage</keyword>
<keyword id="KW-0963">Cytoplasm</keyword>
<keyword id="KW-0210">Decarboxylase</keyword>
<keyword id="KW-0456">Lyase</keyword>
<keyword id="KW-0566">Pantothenate biosynthesis</keyword>
<keyword id="KW-0670">Pyruvate</keyword>
<keyword id="KW-0704">Schiff base</keyword>
<keyword id="KW-0865">Zymogen</keyword>
<organism>
    <name type="scientific">Thermosipho melanesiensis (strain DSM 12029 / CIP 104789 / BI429)</name>
    <dbReference type="NCBI Taxonomy" id="391009"/>
    <lineage>
        <taxon>Bacteria</taxon>
        <taxon>Thermotogati</taxon>
        <taxon>Thermotogota</taxon>
        <taxon>Thermotogae</taxon>
        <taxon>Thermotogales</taxon>
        <taxon>Fervidobacteriaceae</taxon>
        <taxon>Thermosipho</taxon>
    </lineage>
</organism>
<accession>A6LJQ5</accession>
<reference key="1">
    <citation type="submission" date="2007-05" db="EMBL/GenBank/DDBJ databases">
        <title>Complete sequence of Thermosipho melanesiensis BI429.</title>
        <authorList>
            <consortium name="US DOE Joint Genome Institute"/>
            <person name="Copeland A."/>
            <person name="Lucas S."/>
            <person name="Lapidus A."/>
            <person name="Barry K."/>
            <person name="Glavina del Rio T."/>
            <person name="Dalin E."/>
            <person name="Tice H."/>
            <person name="Pitluck S."/>
            <person name="Chertkov O."/>
            <person name="Brettin T."/>
            <person name="Bruce D."/>
            <person name="Detter J.C."/>
            <person name="Han C."/>
            <person name="Schmutz J."/>
            <person name="Larimer F."/>
            <person name="Land M."/>
            <person name="Hauser L."/>
            <person name="Kyrpides N."/>
            <person name="Mikhailova N."/>
            <person name="Nelson K."/>
            <person name="Gogarten J.P."/>
            <person name="Noll K."/>
            <person name="Richardson P."/>
        </authorList>
    </citation>
    <scope>NUCLEOTIDE SEQUENCE [LARGE SCALE GENOMIC DNA]</scope>
    <source>
        <strain>DSM 12029 / CIP 104789 / BI429</strain>
    </source>
</reference>
<comment type="function">
    <text evidence="1">Catalyzes the pyruvoyl-dependent decarboxylation of aspartate to produce beta-alanine.</text>
</comment>
<comment type="catalytic activity">
    <reaction evidence="1">
        <text>L-aspartate + H(+) = beta-alanine + CO2</text>
        <dbReference type="Rhea" id="RHEA:19497"/>
        <dbReference type="ChEBI" id="CHEBI:15378"/>
        <dbReference type="ChEBI" id="CHEBI:16526"/>
        <dbReference type="ChEBI" id="CHEBI:29991"/>
        <dbReference type="ChEBI" id="CHEBI:57966"/>
        <dbReference type="EC" id="4.1.1.11"/>
    </reaction>
</comment>
<comment type="cofactor">
    <cofactor evidence="1">
        <name>pyruvate</name>
        <dbReference type="ChEBI" id="CHEBI:15361"/>
    </cofactor>
    <text evidence="1">Binds 1 pyruvoyl group covalently per subunit.</text>
</comment>
<comment type="pathway">
    <text evidence="1">Cofactor biosynthesis; (R)-pantothenate biosynthesis; beta-alanine from L-aspartate: step 1/1.</text>
</comment>
<comment type="subunit">
    <text evidence="1">Heterooctamer of four alpha and four beta subunits.</text>
</comment>
<comment type="subcellular location">
    <subcellularLocation>
        <location evidence="1">Cytoplasm</location>
    </subcellularLocation>
</comment>
<comment type="PTM">
    <text evidence="1">Is synthesized initially as an inactive proenzyme, which is activated by self-cleavage at a specific serine bond to produce a beta-subunit with a hydroxyl group at its C-terminus and an alpha-subunit with a pyruvoyl group at its N-terminus.</text>
</comment>
<comment type="similarity">
    <text evidence="1">Belongs to the PanD family.</text>
</comment>